<keyword id="KW-0687">Ribonucleoprotein</keyword>
<keyword id="KW-0689">Ribosomal protein</keyword>
<keyword id="KW-0694">RNA-binding</keyword>
<keyword id="KW-0699">rRNA-binding</keyword>
<reference key="1">
    <citation type="journal article" date="2005" name="Nucleic Acids Res.">
        <title>Genome dynamics and diversity of Shigella species, the etiologic agents of bacillary dysentery.</title>
        <authorList>
            <person name="Yang F."/>
            <person name="Yang J."/>
            <person name="Zhang X."/>
            <person name="Chen L."/>
            <person name="Jiang Y."/>
            <person name="Yan Y."/>
            <person name="Tang X."/>
            <person name="Wang J."/>
            <person name="Xiong Z."/>
            <person name="Dong J."/>
            <person name="Xue Y."/>
            <person name="Zhu Y."/>
            <person name="Xu X."/>
            <person name="Sun L."/>
            <person name="Chen S."/>
            <person name="Nie H."/>
            <person name="Peng J."/>
            <person name="Xu J."/>
            <person name="Wang Y."/>
            <person name="Yuan Z."/>
            <person name="Wen Y."/>
            <person name="Yao Z."/>
            <person name="Shen Y."/>
            <person name="Qiang B."/>
            <person name="Hou Y."/>
            <person name="Yu J."/>
            <person name="Jin Q."/>
        </authorList>
    </citation>
    <scope>NUCLEOTIDE SEQUENCE [LARGE SCALE GENOMIC DNA]</scope>
    <source>
        <strain>Sb227</strain>
    </source>
</reference>
<name>RS20_SHIBS</name>
<protein>
    <recommendedName>
        <fullName evidence="1">Small ribosomal subunit protein bS20</fullName>
    </recommendedName>
    <alternativeName>
        <fullName evidence="3">30S ribosomal protein S20</fullName>
    </alternativeName>
</protein>
<comment type="function">
    <text evidence="1">Binds directly to 16S ribosomal RNA.</text>
</comment>
<comment type="similarity">
    <text evidence="1">Belongs to the bacterial ribosomal protein bS20 family.</text>
</comment>
<gene>
    <name evidence="1" type="primary">rpsT</name>
    <name type="ordered locus">SBO_0022</name>
</gene>
<evidence type="ECO:0000255" key="1">
    <source>
        <dbReference type="HAMAP-Rule" id="MF_00500"/>
    </source>
</evidence>
<evidence type="ECO:0000256" key="2">
    <source>
        <dbReference type="SAM" id="MobiDB-lite"/>
    </source>
</evidence>
<evidence type="ECO:0000305" key="3"/>
<organism>
    <name type="scientific">Shigella boydii serotype 4 (strain Sb227)</name>
    <dbReference type="NCBI Taxonomy" id="300268"/>
    <lineage>
        <taxon>Bacteria</taxon>
        <taxon>Pseudomonadati</taxon>
        <taxon>Pseudomonadota</taxon>
        <taxon>Gammaproteobacteria</taxon>
        <taxon>Enterobacterales</taxon>
        <taxon>Enterobacteriaceae</taxon>
        <taxon>Shigella</taxon>
    </lineage>
</organism>
<feature type="chain" id="PRO_0000224987" description="Small ribosomal subunit protein bS20">
    <location>
        <begin position="1"/>
        <end position="87"/>
    </location>
</feature>
<feature type="region of interest" description="Disordered" evidence="2">
    <location>
        <begin position="1"/>
        <end position="26"/>
    </location>
</feature>
<accession>Q326K0</accession>
<sequence length="87" mass="9684">MANIKSAKKRAIQSEKARKHNASRRSMMRTFIKKVYAAIEAGDKAAAQKAFNEMQPIVDRQAAKGLIHKNKAARHKANLTAQINKLA</sequence>
<proteinExistence type="inferred from homology"/>
<dbReference type="EMBL" id="CP000036">
    <property type="protein sequence ID" value="ABB64758.1"/>
    <property type="molecule type" value="Genomic_DNA"/>
</dbReference>
<dbReference type="RefSeq" id="WP_001274021.1">
    <property type="nucleotide sequence ID" value="NC_007613.1"/>
</dbReference>
<dbReference type="SMR" id="Q326K0"/>
<dbReference type="GeneID" id="93777413"/>
<dbReference type="KEGG" id="sbo:SBO_0022"/>
<dbReference type="HOGENOM" id="CLU_160655_4_0_6"/>
<dbReference type="Proteomes" id="UP000007067">
    <property type="component" value="Chromosome"/>
</dbReference>
<dbReference type="GO" id="GO:0005829">
    <property type="term" value="C:cytosol"/>
    <property type="evidence" value="ECO:0007669"/>
    <property type="project" value="TreeGrafter"/>
</dbReference>
<dbReference type="GO" id="GO:0015935">
    <property type="term" value="C:small ribosomal subunit"/>
    <property type="evidence" value="ECO:0007669"/>
    <property type="project" value="TreeGrafter"/>
</dbReference>
<dbReference type="GO" id="GO:0070181">
    <property type="term" value="F:small ribosomal subunit rRNA binding"/>
    <property type="evidence" value="ECO:0007669"/>
    <property type="project" value="TreeGrafter"/>
</dbReference>
<dbReference type="GO" id="GO:0003735">
    <property type="term" value="F:structural constituent of ribosome"/>
    <property type="evidence" value="ECO:0007669"/>
    <property type="project" value="InterPro"/>
</dbReference>
<dbReference type="GO" id="GO:0006412">
    <property type="term" value="P:translation"/>
    <property type="evidence" value="ECO:0007669"/>
    <property type="project" value="UniProtKB-UniRule"/>
</dbReference>
<dbReference type="FunFam" id="1.20.58.110:FF:000001">
    <property type="entry name" value="30S ribosomal protein S20"/>
    <property type="match status" value="1"/>
</dbReference>
<dbReference type="Gene3D" id="1.20.58.110">
    <property type="entry name" value="Ribosomal protein S20"/>
    <property type="match status" value="1"/>
</dbReference>
<dbReference type="HAMAP" id="MF_00500">
    <property type="entry name" value="Ribosomal_bS20"/>
    <property type="match status" value="1"/>
</dbReference>
<dbReference type="InterPro" id="IPR002583">
    <property type="entry name" value="Ribosomal_bS20"/>
</dbReference>
<dbReference type="InterPro" id="IPR036510">
    <property type="entry name" value="Ribosomal_bS20_sf"/>
</dbReference>
<dbReference type="NCBIfam" id="TIGR00029">
    <property type="entry name" value="S20"/>
    <property type="match status" value="1"/>
</dbReference>
<dbReference type="PANTHER" id="PTHR33398">
    <property type="entry name" value="30S RIBOSOMAL PROTEIN S20"/>
    <property type="match status" value="1"/>
</dbReference>
<dbReference type="PANTHER" id="PTHR33398:SF1">
    <property type="entry name" value="SMALL RIBOSOMAL SUBUNIT PROTEIN BS20C"/>
    <property type="match status" value="1"/>
</dbReference>
<dbReference type="Pfam" id="PF01649">
    <property type="entry name" value="Ribosomal_S20p"/>
    <property type="match status" value="1"/>
</dbReference>
<dbReference type="SUPFAM" id="SSF46992">
    <property type="entry name" value="Ribosomal protein S20"/>
    <property type="match status" value="1"/>
</dbReference>